<reference key="1">
    <citation type="journal article" date="2006" name="Genome Res.">
        <title>Skewed genomic variability in strains of the toxigenic bacterial pathogen, Clostridium perfringens.</title>
        <authorList>
            <person name="Myers G.S.A."/>
            <person name="Rasko D.A."/>
            <person name="Cheung J.K."/>
            <person name="Ravel J."/>
            <person name="Seshadri R."/>
            <person name="DeBoy R.T."/>
            <person name="Ren Q."/>
            <person name="Varga J."/>
            <person name="Awad M.M."/>
            <person name="Brinkac L.M."/>
            <person name="Daugherty S.C."/>
            <person name="Haft D.H."/>
            <person name="Dodson R.J."/>
            <person name="Madupu R."/>
            <person name="Nelson W.C."/>
            <person name="Rosovitz M.J."/>
            <person name="Sullivan S.A."/>
            <person name="Khouri H."/>
            <person name="Dimitrov G.I."/>
            <person name="Watkins K.L."/>
            <person name="Mulligan S."/>
            <person name="Benton J."/>
            <person name="Radune D."/>
            <person name="Fisher D.J."/>
            <person name="Atkins H.S."/>
            <person name="Hiscox T."/>
            <person name="Jost B.H."/>
            <person name="Billington S.J."/>
            <person name="Songer J.G."/>
            <person name="McClane B.A."/>
            <person name="Titball R.W."/>
            <person name="Rood J.I."/>
            <person name="Melville S.B."/>
            <person name="Paulsen I.T."/>
        </authorList>
    </citation>
    <scope>NUCLEOTIDE SEQUENCE [LARGE SCALE GENOMIC DNA]</scope>
    <source>
        <strain>SM101 / Type A</strain>
    </source>
</reference>
<evidence type="ECO:0000255" key="1">
    <source>
        <dbReference type="HAMAP-Rule" id="MF_00637"/>
    </source>
</evidence>
<protein>
    <recommendedName>
        <fullName evidence="1">Anti-sigma F factor</fullName>
        <ecNumber evidence="1">2.7.11.1</ecNumber>
    </recommendedName>
    <alternativeName>
        <fullName evidence="1">Stage II sporulation protein AB</fullName>
    </alternativeName>
</protein>
<feature type="chain" id="PRO_0000301413" description="Anti-sigma F factor">
    <location>
        <begin position="1"/>
        <end position="140"/>
    </location>
</feature>
<dbReference type="EC" id="2.7.11.1" evidence="1"/>
<dbReference type="EMBL" id="CP000312">
    <property type="protein sequence ID" value="ABG85496.1"/>
    <property type="molecule type" value="Genomic_DNA"/>
</dbReference>
<dbReference type="RefSeq" id="WP_011592873.1">
    <property type="nucleotide sequence ID" value="NC_008262.1"/>
</dbReference>
<dbReference type="SMR" id="Q0SRC7"/>
<dbReference type="KEGG" id="cpr:CPR_2021"/>
<dbReference type="Proteomes" id="UP000001824">
    <property type="component" value="Chromosome"/>
</dbReference>
<dbReference type="GO" id="GO:0005524">
    <property type="term" value="F:ATP binding"/>
    <property type="evidence" value="ECO:0007669"/>
    <property type="project" value="UniProtKB-KW"/>
</dbReference>
<dbReference type="GO" id="GO:0106310">
    <property type="term" value="F:protein serine kinase activity"/>
    <property type="evidence" value="ECO:0007669"/>
    <property type="project" value="RHEA"/>
</dbReference>
<dbReference type="GO" id="GO:0004674">
    <property type="term" value="F:protein serine/threonine kinase activity"/>
    <property type="evidence" value="ECO:0007669"/>
    <property type="project" value="UniProtKB-KW"/>
</dbReference>
<dbReference type="GO" id="GO:0016989">
    <property type="term" value="F:sigma factor antagonist activity"/>
    <property type="evidence" value="ECO:0007669"/>
    <property type="project" value="InterPro"/>
</dbReference>
<dbReference type="GO" id="GO:0030436">
    <property type="term" value="P:asexual sporulation"/>
    <property type="evidence" value="ECO:0007669"/>
    <property type="project" value="UniProtKB-UniRule"/>
</dbReference>
<dbReference type="GO" id="GO:0042174">
    <property type="term" value="P:negative regulation of sporulation resulting in formation of a cellular spore"/>
    <property type="evidence" value="ECO:0007669"/>
    <property type="project" value="InterPro"/>
</dbReference>
<dbReference type="GO" id="GO:0030435">
    <property type="term" value="P:sporulation resulting in formation of a cellular spore"/>
    <property type="evidence" value="ECO:0007669"/>
    <property type="project" value="UniProtKB-KW"/>
</dbReference>
<dbReference type="CDD" id="cd16942">
    <property type="entry name" value="HATPase_SpoIIAB-like"/>
    <property type="match status" value="1"/>
</dbReference>
<dbReference type="Gene3D" id="3.30.565.10">
    <property type="entry name" value="Histidine kinase-like ATPase, C-terminal domain"/>
    <property type="match status" value="1"/>
</dbReference>
<dbReference type="HAMAP" id="MF_00637">
    <property type="entry name" value="Anti_sigma_F"/>
    <property type="match status" value="1"/>
</dbReference>
<dbReference type="InterPro" id="IPR050267">
    <property type="entry name" value="Anti-sigma-factor_SerPK"/>
</dbReference>
<dbReference type="InterPro" id="IPR010194">
    <property type="entry name" value="Anti-sigma_F"/>
</dbReference>
<dbReference type="InterPro" id="IPR036890">
    <property type="entry name" value="HATPase_C_sf"/>
</dbReference>
<dbReference type="NCBIfam" id="TIGR01925">
    <property type="entry name" value="spIIAB"/>
    <property type="match status" value="1"/>
</dbReference>
<dbReference type="PANTHER" id="PTHR35526:SF3">
    <property type="entry name" value="ANTI-SIGMA-F FACTOR RSBW"/>
    <property type="match status" value="1"/>
</dbReference>
<dbReference type="PANTHER" id="PTHR35526">
    <property type="entry name" value="ANTI-SIGMA-F FACTOR RSBW-RELATED"/>
    <property type="match status" value="1"/>
</dbReference>
<dbReference type="Pfam" id="PF13581">
    <property type="entry name" value="HATPase_c_2"/>
    <property type="match status" value="1"/>
</dbReference>
<dbReference type="SMART" id="SM00387">
    <property type="entry name" value="HATPase_c"/>
    <property type="match status" value="1"/>
</dbReference>
<dbReference type="SUPFAM" id="SSF55874">
    <property type="entry name" value="ATPase domain of HSP90 chaperone/DNA topoisomerase II/histidine kinase"/>
    <property type="match status" value="1"/>
</dbReference>
<sequence length="140" mass="15665">MDNKMRLEFLAKSENEGFARVSVSAFIAQLDPTIEELTDIKTAVSEAVTNAIIHGYECDESKVVIIEASICEDEISITVEDNGIGIENLEEAREPLYTSKPELERSGMGFTVMETFMDSLEVYSEKNKGTKIIMKKKMNT</sequence>
<accession>Q0SRC7</accession>
<gene>
    <name evidence="1" type="primary">spoIIAB</name>
    <name type="ordered locus">CPR_2021</name>
</gene>
<comment type="function">
    <text evidence="1">Binds to sigma F and blocks its ability to form an RNA polymerase holoenzyme (E-sigma F). Phosphorylates SpoIIAA on a serine residue. This phosphorylation may enable SpoIIAA to act as an anti-anti-sigma factor that counteracts SpoIIAB and thus releases sigma F from inhibition.</text>
</comment>
<comment type="catalytic activity">
    <reaction evidence="1">
        <text>L-seryl-[protein] + ATP = O-phospho-L-seryl-[protein] + ADP + H(+)</text>
        <dbReference type="Rhea" id="RHEA:17989"/>
        <dbReference type="Rhea" id="RHEA-COMP:9863"/>
        <dbReference type="Rhea" id="RHEA-COMP:11604"/>
        <dbReference type="ChEBI" id="CHEBI:15378"/>
        <dbReference type="ChEBI" id="CHEBI:29999"/>
        <dbReference type="ChEBI" id="CHEBI:30616"/>
        <dbReference type="ChEBI" id="CHEBI:83421"/>
        <dbReference type="ChEBI" id="CHEBI:456216"/>
        <dbReference type="EC" id="2.7.11.1"/>
    </reaction>
</comment>
<comment type="catalytic activity">
    <reaction evidence="1">
        <text>L-threonyl-[protein] + ATP = O-phospho-L-threonyl-[protein] + ADP + H(+)</text>
        <dbReference type="Rhea" id="RHEA:46608"/>
        <dbReference type="Rhea" id="RHEA-COMP:11060"/>
        <dbReference type="Rhea" id="RHEA-COMP:11605"/>
        <dbReference type="ChEBI" id="CHEBI:15378"/>
        <dbReference type="ChEBI" id="CHEBI:30013"/>
        <dbReference type="ChEBI" id="CHEBI:30616"/>
        <dbReference type="ChEBI" id="CHEBI:61977"/>
        <dbReference type="ChEBI" id="CHEBI:456216"/>
        <dbReference type="EC" id="2.7.11.1"/>
    </reaction>
</comment>
<comment type="similarity">
    <text evidence="1">Belongs to the anti-sigma-factor family.</text>
</comment>
<organism>
    <name type="scientific">Clostridium perfringens (strain SM101 / Type A)</name>
    <dbReference type="NCBI Taxonomy" id="289380"/>
    <lineage>
        <taxon>Bacteria</taxon>
        <taxon>Bacillati</taxon>
        <taxon>Bacillota</taxon>
        <taxon>Clostridia</taxon>
        <taxon>Eubacteriales</taxon>
        <taxon>Clostridiaceae</taxon>
        <taxon>Clostridium</taxon>
    </lineage>
</organism>
<keyword id="KW-0067">ATP-binding</keyword>
<keyword id="KW-0418">Kinase</keyword>
<keyword id="KW-0547">Nucleotide-binding</keyword>
<keyword id="KW-0723">Serine/threonine-protein kinase</keyword>
<keyword id="KW-0749">Sporulation</keyword>
<keyword id="KW-0808">Transferase</keyword>
<name>SP2AB_CLOPS</name>
<proteinExistence type="inferred from homology"/>